<accession>B4S8Y3</accession>
<reference key="1">
    <citation type="submission" date="2008-06" db="EMBL/GenBank/DDBJ databases">
        <title>Complete sequence of chromosome of Prosthecochloris aestuarii DSM 271.</title>
        <authorList>
            <consortium name="US DOE Joint Genome Institute"/>
            <person name="Lucas S."/>
            <person name="Copeland A."/>
            <person name="Lapidus A."/>
            <person name="Glavina del Rio T."/>
            <person name="Dalin E."/>
            <person name="Tice H."/>
            <person name="Bruce D."/>
            <person name="Goodwin L."/>
            <person name="Pitluck S."/>
            <person name="Schmutz J."/>
            <person name="Larimer F."/>
            <person name="Land M."/>
            <person name="Hauser L."/>
            <person name="Kyrpides N."/>
            <person name="Anderson I."/>
            <person name="Liu Z."/>
            <person name="Li T."/>
            <person name="Zhao F."/>
            <person name="Overmann J."/>
            <person name="Bryant D.A."/>
            <person name="Richardson P."/>
        </authorList>
    </citation>
    <scope>NUCLEOTIDE SEQUENCE [LARGE SCALE GENOMIC DNA]</scope>
    <source>
        <strain>DSM 271 / SK 413</strain>
    </source>
</reference>
<gene>
    <name evidence="1" type="primary">rpmG</name>
    <name type="ordered locus">Paes_1500</name>
</gene>
<protein>
    <recommendedName>
        <fullName evidence="1">Large ribosomal subunit protein bL33</fullName>
    </recommendedName>
    <alternativeName>
        <fullName evidence="2">50S ribosomal protein L33</fullName>
    </alternativeName>
</protein>
<sequence>MAKKENRVIITLECTEARKEGASPSRYTTTKNKKNQTERLVLKKYNPSLKKHTLHKEIK</sequence>
<evidence type="ECO:0000255" key="1">
    <source>
        <dbReference type="HAMAP-Rule" id="MF_00294"/>
    </source>
</evidence>
<evidence type="ECO:0000305" key="2"/>
<comment type="similarity">
    <text evidence="1">Belongs to the bacterial ribosomal protein bL33 family.</text>
</comment>
<feature type="chain" id="PRO_1000115150" description="Large ribosomal subunit protein bL33">
    <location>
        <begin position="1"/>
        <end position="59"/>
    </location>
</feature>
<dbReference type="EMBL" id="CP001108">
    <property type="protein sequence ID" value="ACF46520.1"/>
    <property type="molecule type" value="Genomic_DNA"/>
</dbReference>
<dbReference type="RefSeq" id="WP_012506053.1">
    <property type="nucleotide sequence ID" value="NC_011059.1"/>
</dbReference>
<dbReference type="SMR" id="B4S8Y3"/>
<dbReference type="STRING" id="290512.Paes_1500"/>
<dbReference type="KEGG" id="paa:Paes_1500"/>
<dbReference type="eggNOG" id="COG0267">
    <property type="taxonomic scope" value="Bacteria"/>
</dbReference>
<dbReference type="HOGENOM" id="CLU_190949_3_0_10"/>
<dbReference type="Proteomes" id="UP000002725">
    <property type="component" value="Chromosome"/>
</dbReference>
<dbReference type="GO" id="GO:0005737">
    <property type="term" value="C:cytoplasm"/>
    <property type="evidence" value="ECO:0007669"/>
    <property type="project" value="UniProtKB-ARBA"/>
</dbReference>
<dbReference type="GO" id="GO:1990904">
    <property type="term" value="C:ribonucleoprotein complex"/>
    <property type="evidence" value="ECO:0007669"/>
    <property type="project" value="UniProtKB-KW"/>
</dbReference>
<dbReference type="GO" id="GO:0005840">
    <property type="term" value="C:ribosome"/>
    <property type="evidence" value="ECO:0007669"/>
    <property type="project" value="UniProtKB-KW"/>
</dbReference>
<dbReference type="GO" id="GO:0003735">
    <property type="term" value="F:structural constituent of ribosome"/>
    <property type="evidence" value="ECO:0007669"/>
    <property type="project" value="InterPro"/>
</dbReference>
<dbReference type="GO" id="GO:0006412">
    <property type="term" value="P:translation"/>
    <property type="evidence" value="ECO:0007669"/>
    <property type="project" value="UniProtKB-UniRule"/>
</dbReference>
<dbReference type="Gene3D" id="2.20.28.120">
    <property type="entry name" value="Ribosomal protein L33"/>
    <property type="match status" value="1"/>
</dbReference>
<dbReference type="HAMAP" id="MF_00294">
    <property type="entry name" value="Ribosomal_bL33"/>
    <property type="match status" value="1"/>
</dbReference>
<dbReference type="InterPro" id="IPR001705">
    <property type="entry name" value="Ribosomal_bL33"/>
</dbReference>
<dbReference type="InterPro" id="IPR038584">
    <property type="entry name" value="Ribosomal_bL33_sf"/>
</dbReference>
<dbReference type="InterPro" id="IPR011332">
    <property type="entry name" value="Ribosomal_zn-bd"/>
</dbReference>
<dbReference type="NCBIfam" id="NF001764">
    <property type="entry name" value="PRK00504.1"/>
    <property type="match status" value="1"/>
</dbReference>
<dbReference type="NCBIfam" id="NF001860">
    <property type="entry name" value="PRK00595.1"/>
    <property type="match status" value="1"/>
</dbReference>
<dbReference type="NCBIfam" id="TIGR01023">
    <property type="entry name" value="rpmG_bact"/>
    <property type="match status" value="1"/>
</dbReference>
<dbReference type="PANTHER" id="PTHR43168">
    <property type="entry name" value="50S RIBOSOMAL PROTEIN L33, CHLOROPLASTIC"/>
    <property type="match status" value="1"/>
</dbReference>
<dbReference type="PANTHER" id="PTHR43168:SF2">
    <property type="entry name" value="LARGE RIBOSOMAL SUBUNIT PROTEIN BL33C"/>
    <property type="match status" value="1"/>
</dbReference>
<dbReference type="Pfam" id="PF00471">
    <property type="entry name" value="Ribosomal_L33"/>
    <property type="match status" value="1"/>
</dbReference>
<dbReference type="SUPFAM" id="SSF57829">
    <property type="entry name" value="Zn-binding ribosomal proteins"/>
    <property type="match status" value="1"/>
</dbReference>
<organism>
    <name type="scientific">Prosthecochloris aestuarii (strain DSM 271 / SK 413)</name>
    <dbReference type="NCBI Taxonomy" id="290512"/>
    <lineage>
        <taxon>Bacteria</taxon>
        <taxon>Pseudomonadati</taxon>
        <taxon>Chlorobiota</taxon>
        <taxon>Chlorobiia</taxon>
        <taxon>Chlorobiales</taxon>
        <taxon>Chlorobiaceae</taxon>
        <taxon>Prosthecochloris</taxon>
    </lineage>
</organism>
<name>RL33_PROA2</name>
<keyword id="KW-0687">Ribonucleoprotein</keyword>
<keyword id="KW-0689">Ribosomal protein</keyword>
<proteinExistence type="inferred from homology"/>